<keyword id="KW-0002">3D-structure</keyword>
<keyword id="KW-0025">Alternative splicing</keyword>
<keyword id="KW-0963">Cytoplasm</keyword>
<keyword id="KW-0225">Disease variant</keyword>
<keyword id="KW-0238">DNA-binding</keyword>
<keyword id="KW-0479">Metal-binding</keyword>
<keyword id="KW-0539">Nucleus</keyword>
<keyword id="KW-0597">Phosphoprotein</keyword>
<keyword id="KW-1267">Proteomics identification</keyword>
<keyword id="KW-1185">Reference proteome</keyword>
<keyword id="KW-0804">Transcription</keyword>
<keyword id="KW-0805">Transcription regulation</keyword>
<keyword id="KW-0862">Zinc</keyword>
<accession>O15198</accession>
<accession>A2A2Y6</accession>
<accession>O14989</accession>
<accession>Q5TBA1</accession>
<protein>
    <recommendedName>
        <fullName>Mothers against decapentaplegic homolog 9</fullName>
        <shortName>MAD homolog 9</shortName>
        <shortName>Mothers against DPP homolog 9</shortName>
    </recommendedName>
    <alternativeName>
        <fullName>Madh6</fullName>
    </alternativeName>
    <alternativeName>
        <fullName>SMAD family member 9</fullName>
        <shortName>SMAD 9</shortName>
        <shortName>Smad9</shortName>
    </alternativeName>
</protein>
<evidence type="ECO:0000250" key="1"/>
<evidence type="ECO:0000255" key="2">
    <source>
        <dbReference type="PROSITE-ProRule" id="PRU00438"/>
    </source>
</evidence>
<evidence type="ECO:0000255" key="3">
    <source>
        <dbReference type="PROSITE-ProRule" id="PRU00439"/>
    </source>
</evidence>
<evidence type="ECO:0000256" key="4">
    <source>
        <dbReference type="SAM" id="MobiDB-lite"/>
    </source>
</evidence>
<evidence type="ECO:0000269" key="5">
    <source>
    </source>
</evidence>
<evidence type="ECO:0000269" key="6">
    <source>
    </source>
</evidence>
<evidence type="ECO:0000303" key="7">
    <source>
    </source>
</evidence>
<evidence type="ECO:0000303" key="8">
    <source>
    </source>
</evidence>
<evidence type="ECO:0000303" key="9">
    <source>
    </source>
</evidence>
<evidence type="ECO:0000305" key="10"/>
<evidence type="ECO:0007829" key="11">
    <source>
        <dbReference type="PDB" id="6FZT"/>
    </source>
</evidence>
<reference key="1">
    <citation type="journal article" date="1997" name="Genomics">
        <title>Cloning and characterization of a novel member of the human Mad gene family (MADH6).</title>
        <authorList>
            <person name="Watanabe T.K."/>
            <person name="Suzuki M."/>
            <person name="Omori Y."/>
            <person name="Hishigaki H."/>
            <person name="Horie M."/>
            <person name="Kanemoto N."/>
            <person name="Fujiwara T."/>
            <person name="Nakamura Y."/>
            <person name="Takahashi E."/>
        </authorList>
    </citation>
    <scope>NUCLEOTIDE SEQUENCE [MRNA] (ISOFORMS A AND B)</scope>
    <source>
        <tissue>Fetal brain</tissue>
    </source>
</reference>
<reference key="2">
    <citation type="journal article" date="2004" name="Nature">
        <title>The DNA sequence and analysis of human chromosome 13.</title>
        <authorList>
            <person name="Dunham A."/>
            <person name="Matthews L.H."/>
            <person name="Burton J."/>
            <person name="Ashurst J.L."/>
            <person name="Howe K.L."/>
            <person name="Ashcroft K.J."/>
            <person name="Beare D.M."/>
            <person name="Burford D.C."/>
            <person name="Hunt S.E."/>
            <person name="Griffiths-Jones S."/>
            <person name="Jones M.C."/>
            <person name="Keenan S.J."/>
            <person name="Oliver K."/>
            <person name="Scott C.E."/>
            <person name="Ainscough R."/>
            <person name="Almeida J.P."/>
            <person name="Ambrose K.D."/>
            <person name="Andrews D.T."/>
            <person name="Ashwell R.I.S."/>
            <person name="Babbage A.K."/>
            <person name="Bagguley C.L."/>
            <person name="Bailey J."/>
            <person name="Bannerjee R."/>
            <person name="Barlow K.F."/>
            <person name="Bates K."/>
            <person name="Beasley H."/>
            <person name="Bird C.P."/>
            <person name="Bray-Allen S."/>
            <person name="Brown A.J."/>
            <person name="Brown J.Y."/>
            <person name="Burrill W."/>
            <person name="Carder C."/>
            <person name="Carter N.P."/>
            <person name="Chapman J.C."/>
            <person name="Clamp M.E."/>
            <person name="Clark S.Y."/>
            <person name="Clarke G."/>
            <person name="Clee C.M."/>
            <person name="Clegg S.C."/>
            <person name="Cobley V."/>
            <person name="Collins J.E."/>
            <person name="Corby N."/>
            <person name="Coville G.J."/>
            <person name="Deloukas P."/>
            <person name="Dhami P."/>
            <person name="Dunham I."/>
            <person name="Dunn M."/>
            <person name="Earthrowl M.E."/>
            <person name="Ellington A.G."/>
            <person name="Faulkner L."/>
            <person name="Frankish A.G."/>
            <person name="Frankland J."/>
            <person name="French L."/>
            <person name="Garner P."/>
            <person name="Garnett J."/>
            <person name="Gilbert J.G.R."/>
            <person name="Gilson C.J."/>
            <person name="Ghori J."/>
            <person name="Grafham D.V."/>
            <person name="Gribble S.M."/>
            <person name="Griffiths C."/>
            <person name="Hall R.E."/>
            <person name="Hammond S."/>
            <person name="Harley J.L."/>
            <person name="Hart E.A."/>
            <person name="Heath P.D."/>
            <person name="Howden P.J."/>
            <person name="Huckle E.J."/>
            <person name="Hunt P.J."/>
            <person name="Hunt A.R."/>
            <person name="Johnson C."/>
            <person name="Johnson D."/>
            <person name="Kay M."/>
            <person name="Kimberley A.M."/>
            <person name="King A."/>
            <person name="Laird G.K."/>
            <person name="Langford C.J."/>
            <person name="Lawlor S."/>
            <person name="Leongamornlert D.A."/>
            <person name="Lloyd D.M."/>
            <person name="Lloyd C."/>
            <person name="Loveland J.E."/>
            <person name="Lovell J."/>
            <person name="Martin S."/>
            <person name="Mashreghi-Mohammadi M."/>
            <person name="McLaren S.J."/>
            <person name="McMurray A."/>
            <person name="Milne S."/>
            <person name="Moore M.J.F."/>
            <person name="Nickerson T."/>
            <person name="Palmer S.A."/>
            <person name="Pearce A.V."/>
            <person name="Peck A.I."/>
            <person name="Pelan S."/>
            <person name="Phillimore B."/>
            <person name="Porter K.M."/>
            <person name="Rice C.M."/>
            <person name="Searle S."/>
            <person name="Sehra H.K."/>
            <person name="Shownkeen R."/>
            <person name="Skuce C.D."/>
            <person name="Smith M."/>
            <person name="Steward C.A."/>
            <person name="Sycamore N."/>
            <person name="Tester J."/>
            <person name="Thomas D.W."/>
            <person name="Tracey A."/>
            <person name="Tromans A."/>
            <person name="Tubby B."/>
            <person name="Wall M."/>
            <person name="Wallis J.M."/>
            <person name="West A.P."/>
            <person name="Whitehead S.L."/>
            <person name="Willey D.L."/>
            <person name="Wilming L."/>
            <person name="Wray P.W."/>
            <person name="Wright M.W."/>
            <person name="Young L."/>
            <person name="Coulson A."/>
            <person name="Durbin R.M."/>
            <person name="Hubbard T."/>
            <person name="Sulston J.E."/>
            <person name="Beck S."/>
            <person name="Bentley D.R."/>
            <person name="Rogers J."/>
            <person name="Ross M.T."/>
        </authorList>
    </citation>
    <scope>NUCLEOTIDE SEQUENCE [LARGE SCALE GENOMIC DNA]</scope>
</reference>
<reference key="3">
    <citation type="submission" date="2005-07" db="EMBL/GenBank/DDBJ databases">
        <authorList>
            <person name="Mural R.J."/>
            <person name="Istrail S."/>
            <person name="Sutton G.G."/>
            <person name="Florea L."/>
            <person name="Halpern A.L."/>
            <person name="Mobarry C.M."/>
            <person name="Lippert R."/>
            <person name="Walenz B."/>
            <person name="Shatkay H."/>
            <person name="Dew I."/>
            <person name="Miller J.R."/>
            <person name="Flanigan M.J."/>
            <person name="Edwards N.J."/>
            <person name="Bolanos R."/>
            <person name="Fasulo D."/>
            <person name="Halldorsson B.V."/>
            <person name="Hannenhalli S."/>
            <person name="Turner R."/>
            <person name="Yooseph S."/>
            <person name="Lu F."/>
            <person name="Nusskern D.R."/>
            <person name="Shue B.C."/>
            <person name="Zheng X.H."/>
            <person name="Zhong F."/>
            <person name="Delcher A.L."/>
            <person name="Huson D.H."/>
            <person name="Kravitz S.A."/>
            <person name="Mouchard L."/>
            <person name="Reinert K."/>
            <person name="Remington K.A."/>
            <person name="Clark A.G."/>
            <person name="Waterman M.S."/>
            <person name="Eichler E.E."/>
            <person name="Adams M.D."/>
            <person name="Hunkapiller M.W."/>
            <person name="Myers E.W."/>
            <person name="Venter J.C."/>
        </authorList>
    </citation>
    <scope>NUCLEOTIDE SEQUENCE [LARGE SCALE GENOMIC DNA]</scope>
</reference>
<reference key="4">
    <citation type="journal article" date="2004" name="Genome Res.">
        <title>The status, quality, and expansion of the NIH full-length cDNA project: the Mammalian Gene Collection (MGC).</title>
        <authorList>
            <consortium name="The MGC Project Team"/>
        </authorList>
    </citation>
    <scope>NUCLEOTIDE SEQUENCE [LARGE SCALE MRNA] (ISOFORMS A AND B)</scope>
    <source>
        <tissue>Brain</tissue>
        <tissue>Eye</tissue>
    </source>
</reference>
<reference key="5">
    <citation type="journal article" date="1998" name="Annu. Rev. Biochem.">
        <title>TGF-beta signal transduction.</title>
        <authorList>
            <person name="Massague J."/>
        </authorList>
    </citation>
    <scope>REVIEW</scope>
</reference>
<reference key="6">
    <citation type="journal article" date="1999" name="Cytokine Growth Factor Rev.">
        <title>Remarkable versatility of Smad proteins in the nucleus of transforming growth factor-beta activated cells.</title>
        <authorList>
            <person name="Verschueren K."/>
            <person name="Huylebroeck D."/>
        </authorList>
    </citation>
    <scope>REVIEW</scope>
</reference>
<reference key="7">
    <citation type="journal article" date="2000" name="Cytokine Growth Factor Rev.">
        <title>The Smad pathway.</title>
        <authorList>
            <person name="Wrana J.L."/>
            <person name="Attisano L."/>
        </authorList>
    </citation>
    <scope>REVIEW</scope>
</reference>
<reference key="8">
    <citation type="journal article" date="2000" name="Cytokine Growth Factor Rev.">
        <title>TGF-beta signaling by Smad proteins.</title>
        <authorList>
            <person name="Miyazono K."/>
        </authorList>
    </citation>
    <scope>REVIEW</scope>
</reference>
<reference key="9">
    <citation type="journal article" date="2015" name="Mol. Cell. Biol.">
        <title>Nuclear export of Smads by RanBP3L regulates bone morphogenetic protein signaling and mesenchymal stem cell differentiation.</title>
        <authorList>
            <person name="Chen F."/>
            <person name="Lin X."/>
            <person name="Xu P."/>
            <person name="Zhang Z."/>
            <person name="Chen Y."/>
            <person name="Wang C."/>
            <person name="Han J."/>
            <person name="Zhao B."/>
            <person name="Xiao M."/>
            <person name="Feng X.H."/>
        </authorList>
    </citation>
    <scope>INTERACTION WITH RANBP3L</scope>
</reference>
<reference key="10">
    <citation type="journal article" date="2011" name="Hum. Mutat.">
        <title>Molecular genetic characterization of SMAD signaling molecules in pulmonary arterial hypertension.</title>
        <authorList>
            <person name="Nasim M.T."/>
            <person name="Ogo T."/>
            <person name="Ahmed M."/>
            <person name="Randall R."/>
            <person name="Chowdhury H.M."/>
            <person name="Snape K.M."/>
            <person name="Bradshaw T.Y."/>
            <person name="Southgate L."/>
            <person name="Lee G.J."/>
            <person name="Jackson I."/>
            <person name="Lord G.M."/>
            <person name="Gibbs J.S."/>
            <person name="Wilkins M.R."/>
            <person name="Ohta-Ogo K."/>
            <person name="Nakamura K."/>
            <person name="Girerd B."/>
            <person name="Coulet F."/>
            <person name="Soubrier F."/>
            <person name="Humbert M."/>
            <person name="Morrell N.W."/>
            <person name="Trembath R.C."/>
            <person name="Machado R.D."/>
        </authorList>
    </citation>
    <scope>VARIANT PPH2 GLU-43</scope>
    <scope>CHARACTERIZATION OF VARIANT PPH2 GLU-43</scope>
</reference>
<sequence>MHSTTPISSLFSFTSPAVKRLLGWKQGDEEEKWAEKAVDSLVKKLKKKKGAMDELERALSCPGQPSKCVTIPRSLDGRLQVSHRKGLPHVIYCRVWRWPDLQSHHELKPLECCEFPFGSKQKEVCINPYHYRRVETPVLPPVLVPRHSEYNPQLSLLAKFRSASLHSEPLMPHNATYPDSFQQPPCSALPPSPSHAFSQSPCTASYPHSPGSPSEPESPYQHSVDTPPLPYHATEASETQSGQPVDATADRHVVLSIPNGDFRPVCYEEPQHWCSVAYYELNNRVGETFQASSRSVLIDGFTDPSNNRNRFCLGLLSNVNRNSTIENTRRHIGKGVHLYYVGGEVYAECVSDSSIFVQSRNCNYQHGFHPATVCKIPSGCSLKVFNNQLFAQLLAQSVHHGFEVVYELTKMCTIRMSFVKGWGAEYHRQDVTSTPCWIEIHLHGPLQWLDKVLTQMGSPHNPISSVS</sequence>
<proteinExistence type="evidence at protein level"/>
<comment type="function">
    <text>Transcriptional modulator activated by BMP (bone morphogenetic proteins) type 1 receptor kinase. SMAD9 is a receptor-regulated SMAD (R-SMAD).</text>
</comment>
<comment type="subunit">
    <text evidence="6">Interaction with the co-SMAD SMAD4. Interacts with PEBP2-alpha subunit. Interacts with RANBP3L (PubMed:25755279).</text>
</comment>
<comment type="interaction">
    <interactant intactId="EBI-748763">
        <id>O15198</id>
    </interactant>
    <interactant intactId="EBI-710124">
        <id>O60341</id>
        <label>KDM1A</label>
    </interactant>
    <organismsDiffer>false</organismsDiffer>
    <experiments>2</experiments>
</comment>
<comment type="interaction">
    <interactant intactId="EBI-748763">
        <id>O15198</id>
    </interactant>
    <interactant intactId="EBI-2561428">
        <id>Q9Y2U8</id>
        <label>LEMD3</label>
    </interactant>
    <organismsDiffer>false</organismsDiffer>
    <experiments>3</experiments>
</comment>
<comment type="interaction">
    <interactant intactId="EBI-748763">
        <id>O15198</id>
    </interactant>
    <interactant intactId="EBI-912440">
        <id>Q96LA8</id>
        <label>PRMT6</label>
    </interactant>
    <organismsDiffer>false</organismsDiffer>
    <experiments>2</experiments>
</comment>
<comment type="interaction">
    <interactant intactId="EBI-748763">
        <id>O15198</id>
    </interactant>
    <interactant intactId="EBI-347263">
        <id>Q13485</id>
        <label>SMAD4</label>
    </interactant>
    <organismsDiffer>false</organismsDiffer>
    <experiments>4</experiments>
</comment>
<comment type="interaction">
    <interactant intactId="EBI-12273450">
        <id>O15198-2</id>
    </interactant>
    <interactant intactId="EBI-747754">
        <id>P28799</id>
        <label>GRN</label>
    </interactant>
    <organismsDiffer>false</organismsDiffer>
    <experiments>3</experiments>
</comment>
<comment type="interaction">
    <interactant intactId="EBI-12273450">
        <id>O15198-2</id>
    </interactant>
    <interactant intactId="EBI-2561428">
        <id>Q9Y2U8</id>
        <label>LEMD3</label>
    </interactant>
    <organismsDiffer>false</organismsDiffer>
    <experiments>4</experiments>
</comment>
<comment type="interaction">
    <interactant intactId="EBI-12273450">
        <id>O15198-2</id>
    </interactant>
    <interactant intactId="EBI-347263">
        <id>Q13485</id>
        <label>SMAD4</label>
    </interactant>
    <organismsDiffer>false</organismsDiffer>
    <experiments>3</experiments>
</comment>
<comment type="subcellular location">
    <subcellularLocation>
        <location evidence="1">Cytoplasm</location>
    </subcellularLocation>
    <subcellularLocation>
        <location evidence="1">Nucleus</location>
    </subcellularLocation>
    <text evidence="1">In the cytoplasm in the absence of ligand. Migration to the nucleus when complexed with SMAD4 (By similarity).</text>
</comment>
<comment type="alternative products">
    <event type="alternative splicing"/>
    <isoform>
        <id>O15198-1</id>
        <name>A</name>
        <sequence type="displayed"/>
    </isoform>
    <isoform>
        <id>O15198-2</id>
        <name>B</name>
        <sequence type="described" ref="VSP_006182"/>
    </isoform>
</comment>
<comment type="tissue specificity">
    <text>Expressed in heart, brain, placenta, lung, skeletal muscle, prostate, testis, ovary and small intestine. Also expressed in fetal brain, lung and kidney.</text>
</comment>
<comment type="PTM">
    <text>Phosphorylated on serine by BMP (bone morphogenetic proteins) type 1 receptor kinase.</text>
</comment>
<comment type="disease" evidence="5">
    <disease id="DI-03835">
        <name>Pulmonary hypertension, primary, 2</name>
        <acronym>PPH2</acronym>
        <description>A rare disorder characterized by plexiform lesions of proliferating endothelial cells in pulmonary arterioles. The lesions lead to elevated pulmonary arterial pression, right ventricular failure, and death. The disease can occur from infancy throughout life and it has a mean age at onset of 36 years. Penetrance is reduced. Although familial pulmonary hypertension is rare, cases secondary to known etiologies are more common and include those associated with the appetite-suppressant drugs.</description>
        <dbReference type="MIM" id="615342"/>
    </disease>
    <text>The disease may be caused by variants affecting the gene represented in this entry.</text>
</comment>
<comment type="similarity">
    <text evidence="10">Belongs to the dwarfin/SMAD family.</text>
</comment>
<gene>
    <name type="primary">SMAD9</name>
    <name type="synonym">MADH6</name>
    <name type="synonym">MADH9</name>
    <name evidence="8" type="synonym">SMAD8</name>
</gene>
<name>SMAD9_HUMAN</name>
<dbReference type="EMBL" id="D83760">
    <property type="protein sequence ID" value="BAA21128.1"/>
    <property type="molecule type" value="mRNA"/>
</dbReference>
<dbReference type="EMBL" id="D83761">
    <property type="protein sequence ID" value="BAA21129.1"/>
    <property type="molecule type" value="mRNA"/>
</dbReference>
<dbReference type="EMBL" id="AL138706">
    <property type="status" value="NOT_ANNOTATED_CDS"/>
    <property type="molecule type" value="Genomic_DNA"/>
</dbReference>
<dbReference type="EMBL" id="CH471075">
    <property type="protein sequence ID" value="EAX08571.1"/>
    <property type="molecule type" value="Genomic_DNA"/>
</dbReference>
<dbReference type="EMBL" id="CH471075">
    <property type="protein sequence ID" value="EAX08572.1"/>
    <property type="molecule type" value="Genomic_DNA"/>
</dbReference>
<dbReference type="EMBL" id="BC011559">
    <property type="protein sequence ID" value="AAH11559.1"/>
    <property type="molecule type" value="mRNA"/>
</dbReference>
<dbReference type="EMBL" id="BC104760">
    <property type="protein sequence ID" value="AAI04761.1"/>
    <property type="molecule type" value="mRNA"/>
</dbReference>
<dbReference type="EMBL" id="BC104762">
    <property type="protein sequence ID" value="AAI04763.1"/>
    <property type="molecule type" value="mRNA"/>
</dbReference>
<dbReference type="EMBL" id="BC143240">
    <property type="protein sequence ID" value="AAI43241.1"/>
    <property type="molecule type" value="mRNA"/>
</dbReference>
<dbReference type="CCDS" id="CCDS45032.1">
    <molecule id="O15198-1"/>
</dbReference>
<dbReference type="CCDS" id="CCDS9360.1">
    <molecule id="O15198-2"/>
</dbReference>
<dbReference type="RefSeq" id="NP_001120689.1">
    <molecule id="O15198-1"/>
    <property type="nucleotide sequence ID" value="NM_001127217.3"/>
</dbReference>
<dbReference type="RefSeq" id="NP_001365550.1">
    <molecule id="O15198-2"/>
    <property type="nucleotide sequence ID" value="NM_001378621.1"/>
</dbReference>
<dbReference type="RefSeq" id="NP_005896.1">
    <molecule id="O15198-2"/>
    <property type="nucleotide sequence ID" value="NM_005905.6"/>
</dbReference>
<dbReference type="RefSeq" id="XP_047286313.1">
    <molecule id="O15198-1"/>
    <property type="nucleotide sequence ID" value="XM_047430357.1"/>
</dbReference>
<dbReference type="RefSeq" id="XP_047286314.1">
    <molecule id="O15198-1"/>
    <property type="nucleotide sequence ID" value="XM_047430358.1"/>
</dbReference>
<dbReference type="RefSeq" id="XP_047286315.1">
    <molecule id="O15198-1"/>
    <property type="nucleotide sequence ID" value="XM_047430359.1"/>
</dbReference>
<dbReference type="RefSeq" id="XP_047286316.1">
    <molecule id="O15198-1"/>
    <property type="nucleotide sequence ID" value="XM_047430360.1"/>
</dbReference>
<dbReference type="RefSeq" id="XP_047286319.1">
    <molecule id="O15198-2"/>
    <property type="nucleotide sequence ID" value="XM_047430363.1"/>
</dbReference>
<dbReference type="RefSeq" id="XP_047286320.1">
    <molecule id="O15198-2"/>
    <property type="nucleotide sequence ID" value="XM_047430364.1"/>
</dbReference>
<dbReference type="PDB" id="6FZT">
    <property type="method" value="X-ray"/>
    <property type="resolution" value="2.46 A"/>
    <property type="chains" value="A/B=1-140"/>
</dbReference>
<dbReference type="PDBsum" id="6FZT"/>
<dbReference type="SASBDB" id="O15198"/>
<dbReference type="SMR" id="O15198"/>
<dbReference type="BioGRID" id="110268">
    <property type="interactions" value="131"/>
</dbReference>
<dbReference type="CORUM" id="O15198"/>
<dbReference type="FunCoup" id="O15198">
    <property type="interactions" value="1264"/>
</dbReference>
<dbReference type="IntAct" id="O15198">
    <property type="interactions" value="108"/>
</dbReference>
<dbReference type="MINT" id="O15198"/>
<dbReference type="STRING" id="9606.ENSP00000369154"/>
<dbReference type="iPTMnet" id="O15198"/>
<dbReference type="PhosphoSitePlus" id="O15198"/>
<dbReference type="BioMuta" id="SMAD9"/>
<dbReference type="jPOST" id="O15198"/>
<dbReference type="MassIVE" id="O15198"/>
<dbReference type="PaxDb" id="9606-ENSP00000369154"/>
<dbReference type="PeptideAtlas" id="O15198"/>
<dbReference type="ProteomicsDB" id="48505">
    <molecule id="O15198-1"/>
</dbReference>
<dbReference type="ProteomicsDB" id="48506">
    <molecule id="O15198-2"/>
</dbReference>
<dbReference type="Pumba" id="O15198"/>
<dbReference type="Antibodypedia" id="3969">
    <property type="antibodies" value="338 antibodies from 39 providers"/>
</dbReference>
<dbReference type="DNASU" id="4093"/>
<dbReference type="Ensembl" id="ENST00000350148.10">
    <molecule id="O15198-2"/>
    <property type="protein sequence ID" value="ENSP00000239885.6"/>
    <property type="gene ID" value="ENSG00000120693.16"/>
</dbReference>
<dbReference type="Ensembl" id="ENST00000379826.5">
    <molecule id="O15198-1"/>
    <property type="protein sequence ID" value="ENSP00000369154.4"/>
    <property type="gene ID" value="ENSG00000120693.16"/>
</dbReference>
<dbReference type="Ensembl" id="ENST00000715264.1">
    <molecule id="O15198-1"/>
    <property type="protein sequence ID" value="ENSP00000520435.1"/>
    <property type="gene ID" value="ENSG00000120693.16"/>
</dbReference>
<dbReference type="GeneID" id="4093"/>
<dbReference type="KEGG" id="hsa:4093"/>
<dbReference type="MANE-Select" id="ENST00000379826.5">
    <property type="protein sequence ID" value="ENSP00000369154.4"/>
    <property type="RefSeq nucleotide sequence ID" value="NM_001127217.3"/>
    <property type="RefSeq protein sequence ID" value="NP_001120689.1"/>
</dbReference>
<dbReference type="UCSC" id="uc001uvw.3">
    <molecule id="O15198-1"/>
    <property type="organism name" value="human"/>
</dbReference>
<dbReference type="AGR" id="HGNC:6774"/>
<dbReference type="CTD" id="4093"/>
<dbReference type="DisGeNET" id="4093"/>
<dbReference type="GeneCards" id="SMAD9"/>
<dbReference type="GeneReviews" id="SMAD9"/>
<dbReference type="HGNC" id="HGNC:6774">
    <property type="gene designation" value="SMAD9"/>
</dbReference>
<dbReference type="HPA" id="ENSG00000120693">
    <property type="expression patterns" value="Tissue enhanced (thyroid)"/>
</dbReference>
<dbReference type="MalaCards" id="SMAD9"/>
<dbReference type="MIM" id="603295">
    <property type="type" value="gene"/>
</dbReference>
<dbReference type="MIM" id="615342">
    <property type="type" value="phenotype"/>
</dbReference>
<dbReference type="neXtProt" id="NX_O15198"/>
<dbReference type="OpenTargets" id="ENSG00000120693"/>
<dbReference type="Orphanet" id="275777">
    <property type="disease" value="Heritable pulmonary arterial hypertension"/>
</dbReference>
<dbReference type="PharmGKB" id="PA30531"/>
<dbReference type="VEuPathDB" id="HostDB:ENSG00000120693"/>
<dbReference type="eggNOG" id="KOG3701">
    <property type="taxonomic scope" value="Eukaryota"/>
</dbReference>
<dbReference type="GeneTree" id="ENSGT00940000163092"/>
<dbReference type="HOGENOM" id="CLU_026736_0_2_1"/>
<dbReference type="InParanoid" id="O15198"/>
<dbReference type="OMA" id="YHATETP"/>
<dbReference type="OrthoDB" id="5794312at2759"/>
<dbReference type="PAN-GO" id="O15198">
    <property type="GO annotations" value="10 GO annotations based on evolutionary models"/>
</dbReference>
<dbReference type="PhylomeDB" id="O15198"/>
<dbReference type="TreeFam" id="TF314923"/>
<dbReference type="PathwayCommons" id="O15198"/>
<dbReference type="Reactome" id="R-HSA-201451">
    <property type="pathway name" value="Signaling by BMP"/>
</dbReference>
<dbReference type="SignaLink" id="O15198"/>
<dbReference type="SIGNOR" id="O15198"/>
<dbReference type="BioGRID-ORCS" id="4093">
    <property type="hits" value="14 hits in 1176 CRISPR screens"/>
</dbReference>
<dbReference type="ChiTaRS" id="SMAD9">
    <property type="organism name" value="human"/>
</dbReference>
<dbReference type="GeneWiki" id="Mothers_against_decapentaplegic_homolog_9"/>
<dbReference type="GenomeRNAi" id="4093"/>
<dbReference type="Pharos" id="O15198">
    <property type="development level" value="Tbio"/>
</dbReference>
<dbReference type="PRO" id="PR:O15198"/>
<dbReference type="Proteomes" id="UP000005640">
    <property type="component" value="Chromosome 13"/>
</dbReference>
<dbReference type="RNAct" id="O15198">
    <property type="molecule type" value="protein"/>
</dbReference>
<dbReference type="Bgee" id="ENSG00000120693">
    <property type="expression patterns" value="Expressed in corpus epididymis and 179 other cell types or tissues"/>
</dbReference>
<dbReference type="ExpressionAtlas" id="O15198">
    <property type="expression patterns" value="baseline and differential"/>
</dbReference>
<dbReference type="GO" id="GO:0000785">
    <property type="term" value="C:chromatin"/>
    <property type="evidence" value="ECO:0000247"/>
    <property type="project" value="NTNU_SB"/>
</dbReference>
<dbReference type="GO" id="GO:0005737">
    <property type="term" value="C:cytoplasm"/>
    <property type="evidence" value="ECO:0000250"/>
    <property type="project" value="BHF-UCL"/>
</dbReference>
<dbReference type="GO" id="GO:0005829">
    <property type="term" value="C:cytosol"/>
    <property type="evidence" value="ECO:0000314"/>
    <property type="project" value="HPA"/>
</dbReference>
<dbReference type="GO" id="GO:0071144">
    <property type="term" value="C:heteromeric SMAD protein complex"/>
    <property type="evidence" value="ECO:0000318"/>
    <property type="project" value="GO_Central"/>
</dbReference>
<dbReference type="GO" id="GO:0005654">
    <property type="term" value="C:nucleoplasm"/>
    <property type="evidence" value="ECO:0000314"/>
    <property type="project" value="HPA"/>
</dbReference>
<dbReference type="GO" id="GO:0005634">
    <property type="term" value="C:nucleus"/>
    <property type="evidence" value="ECO:0000250"/>
    <property type="project" value="BHF-UCL"/>
</dbReference>
<dbReference type="GO" id="GO:0071141">
    <property type="term" value="C:SMAD protein complex"/>
    <property type="evidence" value="ECO:0000303"/>
    <property type="project" value="BHF-UCL"/>
</dbReference>
<dbReference type="GO" id="GO:0003700">
    <property type="term" value="F:DNA-binding transcription factor activity"/>
    <property type="evidence" value="ECO:0000250"/>
    <property type="project" value="UniProt"/>
</dbReference>
<dbReference type="GO" id="GO:0000981">
    <property type="term" value="F:DNA-binding transcription factor activity, RNA polymerase II-specific"/>
    <property type="evidence" value="ECO:0000247"/>
    <property type="project" value="NTNU_SB"/>
</dbReference>
<dbReference type="GO" id="GO:0070411">
    <property type="term" value="F:I-SMAD binding"/>
    <property type="evidence" value="ECO:0000318"/>
    <property type="project" value="GO_Central"/>
</dbReference>
<dbReference type="GO" id="GO:0046872">
    <property type="term" value="F:metal ion binding"/>
    <property type="evidence" value="ECO:0007669"/>
    <property type="project" value="UniProtKB-KW"/>
</dbReference>
<dbReference type="GO" id="GO:0000978">
    <property type="term" value="F:RNA polymerase II cis-regulatory region sequence-specific DNA binding"/>
    <property type="evidence" value="ECO:0000318"/>
    <property type="project" value="GO_Central"/>
</dbReference>
<dbReference type="GO" id="GO:0009653">
    <property type="term" value="P:anatomical structure morphogenesis"/>
    <property type="evidence" value="ECO:0000318"/>
    <property type="project" value="GO_Central"/>
</dbReference>
<dbReference type="GO" id="GO:0030509">
    <property type="term" value="P:BMP signaling pathway"/>
    <property type="evidence" value="ECO:0000314"/>
    <property type="project" value="UniProt"/>
</dbReference>
<dbReference type="GO" id="GO:0030154">
    <property type="term" value="P:cell differentiation"/>
    <property type="evidence" value="ECO:0000318"/>
    <property type="project" value="GO_Central"/>
</dbReference>
<dbReference type="GO" id="GO:0071773">
    <property type="term" value="P:cellular response to BMP stimulus"/>
    <property type="evidence" value="ECO:0000303"/>
    <property type="project" value="BHF-UCL"/>
</dbReference>
<dbReference type="GO" id="GO:0006879">
    <property type="term" value="P:intracellular iron ion homeostasis"/>
    <property type="evidence" value="ECO:0000314"/>
    <property type="project" value="UniProt"/>
</dbReference>
<dbReference type="GO" id="GO:0001649">
    <property type="term" value="P:osteoblast differentiation"/>
    <property type="evidence" value="ECO:0000314"/>
    <property type="project" value="UniProt"/>
</dbReference>
<dbReference type="GO" id="GO:0045944">
    <property type="term" value="P:positive regulation of transcription by RNA polymerase II"/>
    <property type="evidence" value="ECO:0000304"/>
    <property type="project" value="BHF-UCL"/>
</dbReference>
<dbReference type="GO" id="GO:0006357">
    <property type="term" value="P:regulation of transcription by RNA polymerase II"/>
    <property type="evidence" value="ECO:0000318"/>
    <property type="project" value="GO_Central"/>
</dbReference>
<dbReference type="GO" id="GO:0060395">
    <property type="term" value="P:SMAD protein signal transduction"/>
    <property type="evidence" value="ECO:0000250"/>
    <property type="project" value="BHF-UCL"/>
</dbReference>
<dbReference type="GO" id="GO:0048863">
    <property type="term" value="P:stem cell differentiation"/>
    <property type="evidence" value="ECO:0000250"/>
    <property type="project" value="UniProt"/>
</dbReference>
<dbReference type="GO" id="GO:0007179">
    <property type="term" value="P:transforming growth factor beta receptor signaling pathway"/>
    <property type="evidence" value="ECO:0000318"/>
    <property type="project" value="GO_Central"/>
</dbReference>
<dbReference type="CDD" id="cd10490">
    <property type="entry name" value="MH1_SMAD_1_5_9"/>
    <property type="match status" value="1"/>
</dbReference>
<dbReference type="FunFam" id="2.60.200.10:FF:000001">
    <property type="entry name" value="Mothers against decapentaplegic homolog"/>
    <property type="match status" value="1"/>
</dbReference>
<dbReference type="FunFam" id="3.90.520.10:FF:000001">
    <property type="entry name" value="Mothers against decapentaplegic homolog"/>
    <property type="match status" value="1"/>
</dbReference>
<dbReference type="Gene3D" id="2.60.200.10">
    <property type="match status" value="1"/>
</dbReference>
<dbReference type="Gene3D" id="3.90.520.10">
    <property type="entry name" value="SMAD MH1 domain"/>
    <property type="match status" value="1"/>
</dbReference>
<dbReference type="InterPro" id="IPR013790">
    <property type="entry name" value="Dwarfin"/>
</dbReference>
<dbReference type="InterPro" id="IPR003619">
    <property type="entry name" value="MAD_homology1_Dwarfin-type"/>
</dbReference>
<dbReference type="InterPro" id="IPR013019">
    <property type="entry name" value="MAD_homology_MH1"/>
</dbReference>
<dbReference type="InterPro" id="IPR017855">
    <property type="entry name" value="SMAD-like_dom_sf"/>
</dbReference>
<dbReference type="InterPro" id="IPR001132">
    <property type="entry name" value="SMAD_dom_Dwarfin-type"/>
</dbReference>
<dbReference type="InterPro" id="IPR008984">
    <property type="entry name" value="SMAD_FHA_dom_sf"/>
</dbReference>
<dbReference type="InterPro" id="IPR036578">
    <property type="entry name" value="SMAD_MH1_sf"/>
</dbReference>
<dbReference type="PANTHER" id="PTHR13703:SF41">
    <property type="entry name" value="MOTHERS AGAINST DECAPENTAPLEGIC HOMOLOG 9"/>
    <property type="match status" value="1"/>
</dbReference>
<dbReference type="PANTHER" id="PTHR13703">
    <property type="entry name" value="SMAD"/>
    <property type="match status" value="1"/>
</dbReference>
<dbReference type="Pfam" id="PF03165">
    <property type="entry name" value="MH1"/>
    <property type="match status" value="1"/>
</dbReference>
<dbReference type="Pfam" id="PF03166">
    <property type="entry name" value="MH2"/>
    <property type="match status" value="1"/>
</dbReference>
<dbReference type="SMART" id="SM00523">
    <property type="entry name" value="DWA"/>
    <property type="match status" value="1"/>
</dbReference>
<dbReference type="SMART" id="SM00524">
    <property type="entry name" value="DWB"/>
    <property type="match status" value="1"/>
</dbReference>
<dbReference type="SUPFAM" id="SSF56366">
    <property type="entry name" value="SMAD MH1 domain"/>
    <property type="match status" value="1"/>
</dbReference>
<dbReference type="SUPFAM" id="SSF49879">
    <property type="entry name" value="SMAD/FHA domain"/>
    <property type="match status" value="1"/>
</dbReference>
<dbReference type="PROSITE" id="PS51075">
    <property type="entry name" value="MH1"/>
    <property type="match status" value="1"/>
</dbReference>
<dbReference type="PROSITE" id="PS51076">
    <property type="entry name" value="MH2"/>
    <property type="match status" value="1"/>
</dbReference>
<feature type="chain" id="PRO_0000090875" description="Mothers against decapentaplegic homolog 9">
    <location>
        <begin position="1"/>
        <end position="467"/>
    </location>
</feature>
<feature type="domain" description="MH1" evidence="2">
    <location>
        <begin position="16"/>
        <end position="140"/>
    </location>
</feature>
<feature type="domain" description="MH2" evidence="3">
    <location>
        <begin position="273"/>
        <end position="467"/>
    </location>
</feature>
<feature type="region of interest" description="Disordered" evidence="4">
    <location>
        <begin position="174"/>
        <end position="246"/>
    </location>
</feature>
<feature type="compositionally biased region" description="Low complexity" evidence="4">
    <location>
        <begin position="205"/>
        <end position="220"/>
    </location>
</feature>
<feature type="binding site" evidence="1">
    <location>
        <position position="68"/>
    </location>
    <ligand>
        <name>Zn(2+)</name>
        <dbReference type="ChEBI" id="CHEBI:29105"/>
    </ligand>
</feature>
<feature type="binding site" evidence="1">
    <location>
        <position position="113"/>
    </location>
    <ligand>
        <name>Zn(2+)</name>
        <dbReference type="ChEBI" id="CHEBI:29105"/>
    </ligand>
</feature>
<feature type="binding site" evidence="1">
    <location>
        <position position="125"/>
    </location>
    <ligand>
        <name>Zn(2+)</name>
        <dbReference type="ChEBI" id="CHEBI:29105"/>
    </ligand>
</feature>
<feature type="binding site" evidence="1">
    <location>
        <position position="130"/>
    </location>
    <ligand>
        <name>Zn(2+)</name>
        <dbReference type="ChEBI" id="CHEBI:29105"/>
    </ligand>
</feature>
<feature type="splice variant" id="VSP_006182" description="In isoform B." evidence="7 9">
    <location>
        <begin position="224"/>
        <end position="260"/>
    </location>
</feature>
<feature type="sequence variant" id="VAR_066871" description="In PPH2; affects SMAD-mediated signaling; dbSNP:rs397514715." evidence="5">
    <original>K</original>
    <variation>E</variation>
    <location>
        <position position="43"/>
    </location>
</feature>
<feature type="strand" evidence="11">
    <location>
        <begin position="10"/>
        <end position="12"/>
    </location>
</feature>
<feature type="helix" evidence="11">
    <location>
        <begin position="16"/>
        <end position="22"/>
    </location>
</feature>
<feature type="helix" evidence="11">
    <location>
        <begin position="29"/>
        <end position="45"/>
    </location>
</feature>
<feature type="helix" evidence="11">
    <location>
        <begin position="51"/>
        <end position="60"/>
    </location>
</feature>
<feature type="strand" evidence="11">
    <location>
        <begin position="70"/>
        <end position="72"/>
    </location>
</feature>
<feature type="strand" evidence="11">
    <location>
        <begin position="79"/>
        <end position="81"/>
    </location>
</feature>
<feature type="strand" evidence="11">
    <location>
        <begin position="84"/>
        <end position="86"/>
    </location>
</feature>
<feature type="helix" evidence="11">
    <location>
        <begin position="88"/>
        <end position="96"/>
    </location>
</feature>
<feature type="helix" evidence="11">
    <location>
        <begin position="104"/>
        <end position="106"/>
    </location>
</feature>
<feature type="strand" evidence="11">
    <location>
        <begin position="107"/>
        <end position="109"/>
    </location>
</feature>
<feature type="strand" evidence="11">
    <location>
        <begin position="122"/>
        <end position="125"/>
    </location>
</feature>
<feature type="helix" evidence="11">
    <location>
        <begin position="128"/>
        <end position="130"/>
    </location>
</feature>
<feature type="strand" evidence="11">
    <location>
        <begin position="131"/>
        <end position="133"/>
    </location>
</feature>
<organism>
    <name type="scientific">Homo sapiens</name>
    <name type="common">Human</name>
    <dbReference type="NCBI Taxonomy" id="9606"/>
    <lineage>
        <taxon>Eukaryota</taxon>
        <taxon>Metazoa</taxon>
        <taxon>Chordata</taxon>
        <taxon>Craniata</taxon>
        <taxon>Vertebrata</taxon>
        <taxon>Euteleostomi</taxon>
        <taxon>Mammalia</taxon>
        <taxon>Eutheria</taxon>
        <taxon>Euarchontoglires</taxon>
        <taxon>Primates</taxon>
        <taxon>Haplorrhini</taxon>
        <taxon>Catarrhini</taxon>
        <taxon>Hominidae</taxon>
        <taxon>Homo</taxon>
    </lineage>
</organism>